<gene>
    <name evidence="1" type="primary">gmk</name>
    <name type="ordered locus">BCI_0110</name>
</gene>
<name>KGUA_BAUCH</name>
<feature type="chain" id="PRO_0000266290" description="Guanylate kinase">
    <location>
        <begin position="1"/>
        <end position="204"/>
    </location>
</feature>
<feature type="domain" description="Guanylate kinase-like" evidence="1">
    <location>
        <begin position="1"/>
        <end position="182"/>
    </location>
</feature>
<feature type="binding site" evidence="1">
    <location>
        <begin position="7"/>
        <end position="14"/>
    </location>
    <ligand>
        <name>ATP</name>
        <dbReference type="ChEBI" id="CHEBI:30616"/>
    </ligand>
</feature>
<dbReference type="EC" id="2.7.4.8" evidence="1"/>
<dbReference type="EMBL" id="CP000238">
    <property type="protein sequence ID" value="ABF14262.1"/>
    <property type="molecule type" value="Genomic_DNA"/>
</dbReference>
<dbReference type="RefSeq" id="WP_011520314.1">
    <property type="nucleotide sequence ID" value="NC_007984.1"/>
</dbReference>
<dbReference type="SMR" id="Q1LTY3"/>
<dbReference type="STRING" id="374463.BCI_0110"/>
<dbReference type="KEGG" id="bci:BCI_0110"/>
<dbReference type="HOGENOM" id="CLU_001715_1_0_6"/>
<dbReference type="OrthoDB" id="9808150at2"/>
<dbReference type="Proteomes" id="UP000002427">
    <property type="component" value="Chromosome"/>
</dbReference>
<dbReference type="GO" id="GO:0005829">
    <property type="term" value="C:cytosol"/>
    <property type="evidence" value="ECO:0007669"/>
    <property type="project" value="TreeGrafter"/>
</dbReference>
<dbReference type="GO" id="GO:0005524">
    <property type="term" value="F:ATP binding"/>
    <property type="evidence" value="ECO:0007669"/>
    <property type="project" value="UniProtKB-UniRule"/>
</dbReference>
<dbReference type="GO" id="GO:0004385">
    <property type="term" value="F:guanylate kinase activity"/>
    <property type="evidence" value="ECO:0007669"/>
    <property type="project" value="UniProtKB-UniRule"/>
</dbReference>
<dbReference type="CDD" id="cd00071">
    <property type="entry name" value="GMPK"/>
    <property type="match status" value="1"/>
</dbReference>
<dbReference type="FunFam" id="3.40.50.300:FF:000084">
    <property type="entry name" value="Guanylate kinase"/>
    <property type="match status" value="1"/>
</dbReference>
<dbReference type="FunFam" id="3.30.63.10:FF:000002">
    <property type="entry name" value="Guanylate kinase 1"/>
    <property type="match status" value="1"/>
</dbReference>
<dbReference type="Gene3D" id="3.30.63.10">
    <property type="entry name" value="Guanylate Kinase phosphate binding domain"/>
    <property type="match status" value="1"/>
</dbReference>
<dbReference type="Gene3D" id="3.40.50.300">
    <property type="entry name" value="P-loop containing nucleotide triphosphate hydrolases"/>
    <property type="match status" value="1"/>
</dbReference>
<dbReference type="HAMAP" id="MF_00328">
    <property type="entry name" value="Guanylate_kinase"/>
    <property type="match status" value="1"/>
</dbReference>
<dbReference type="InterPro" id="IPR008145">
    <property type="entry name" value="GK/Ca_channel_bsu"/>
</dbReference>
<dbReference type="InterPro" id="IPR008144">
    <property type="entry name" value="Guanylate_kin-like_dom"/>
</dbReference>
<dbReference type="InterPro" id="IPR017665">
    <property type="entry name" value="Guanylate_kinase"/>
</dbReference>
<dbReference type="InterPro" id="IPR020590">
    <property type="entry name" value="Guanylate_kinase_CS"/>
</dbReference>
<dbReference type="InterPro" id="IPR027417">
    <property type="entry name" value="P-loop_NTPase"/>
</dbReference>
<dbReference type="NCBIfam" id="TIGR03263">
    <property type="entry name" value="guanyl_kin"/>
    <property type="match status" value="1"/>
</dbReference>
<dbReference type="PANTHER" id="PTHR23117:SF13">
    <property type="entry name" value="GUANYLATE KINASE"/>
    <property type="match status" value="1"/>
</dbReference>
<dbReference type="PANTHER" id="PTHR23117">
    <property type="entry name" value="GUANYLATE KINASE-RELATED"/>
    <property type="match status" value="1"/>
</dbReference>
<dbReference type="Pfam" id="PF00625">
    <property type="entry name" value="Guanylate_kin"/>
    <property type="match status" value="1"/>
</dbReference>
<dbReference type="SMART" id="SM00072">
    <property type="entry name" value="GuKc"/>
    <property type="match status" value="1"/>
</dbReference>
<dbReference type="SUPFAM" id="SSF52540">
    <property type="entry name" value="P-loop containing nucleoside triphosphate hydrolases"/>
    <property type="match status" value="1"/>
</dbReference>
<dbReference type="PROSITE" id="PS00856">
    <property type="entry name" value="GUANYLATE_KINASE_1"/>
    <property type="match status" value="1"/>
</dbReference>
<dbReference type="PROSITE" id="PS50052">
    <property type="entry name" value="GUANYLATE_KINASE_2"/>
    <property type="match status" value="1"/>
</dbReference>
<comment type="function">
    <text evidence="1">Essential for recycling GMP and indirectly, cGMP.</text>
</comment>
<comment type="catalytic activity">
    <reaction evidence="1">
        <text>GMP + ATP = GDP + ADP</text>
        <dbReference type="Rhea" id="RHEA:20780"/>
        <dbReference type="ChEBI" id="CHEBI:30616"/>
        <dbReference type="ChEBI" id="CHEBI:58115"/>
        <dbReference type="ChEBI" id="CHEBI:58189"/>
        <dbReference type="ChEBI" id="CHEBI:456216"/>
        <dbReference type="EC" id="2.7.4.8"/>
    </reaction>
</comment>
<comment type="subcellular location">
    <subcellularLocation>
        <location evidence="1">Cytoplasm</location>
    </subcellularLocation>
</comment>
<comment type="similarity">
    <text evidence="1">Belongs to the guanylate kinase family.</text>
</comment>
<evidence type="ECO:0000255" key="1">
    <source>
        <dbReference type="HAMAP-Rule" id="MF_00328"/>
    </source>
</evidence>
<protein>
    <recommendedName>
        <fullName evidence="1">Guanylate kinase</fullName>
        <ecNumber evidence="1">2.7.4.8</ecNumber>
    </recommendedName>
    <alternativeName>
        <fullName evidence="1">GMP kinase</fullName>
    </alternativeName>
</protein>
<organism>
    <name type="scientific">Baumannia cicadellinicola subsp. Homalodisca coagulata</name>
    <dbReference type="NCBI Taxonomy" id="374463"/>
    <lineage>
        <taxon>Bacteria</taxon>
        <taxon>Pseudomonadati</taxon>
        <taxon>Pseudomonadota</taxon>
        <taxon>Gammaproteobacteria</taxon>
        <taxon>Candidatus Palibaumannia</taxon>
    </lineage>
</organism>
<proteinExistence type="inferred from homology"/>
<reference key="1">
    <citation type="journal article" date="2006" name="PLoS Biol.">
        <title>Metabolic complementarity and genomics of the dual bacterial symbiosis of sharpshooters.</title>
        <authorList>
            <person name="Wu D."/>
            <person name="Daugherty S.C."/>
            <person name="Van Aken S.E."/>
            <person name="Pai G.H."/>
            <person name="Watkins K.L."/>
            <person name="Khouri H."/>
            <person name="Tallon L.J."/>
            <person name="Zaborsky J.M."/>
            <person name="Dunbar H.E."/>
            <person name="Tran P.L."/>
            <person name="Moran N.A."/>
            <person name="Eisen J.A."/>
        </authorList>
    </citation>
    <scope>NUCLEOTIDE SEQUENCE [LARGE SCALE GENOMIC DNA]</scope>
</reference>
<keyword id="KW-0067">ATP-binding</keyword>
<keyword id="KW-0963">Cytoplasm</keyword>
<keyword id="KW-0418">Kinase</keyword>
<keyword id="KW-0547">Nucleotide-binding</keyword>
<keyword id="KW-1185">Reference proteome</keyword>
<keyword id="KW-0808">Transferase</keyword>
<sequence length="204" mass="23915">MLYIISAPSGTGKSSLLQALLRTKRLPLHEIRISISHTTRAMRPGEINGQHYYFISVEEFEKLIDQDAFLEYARVFNHYYGTLRQEVDSILINSVDILLDIDWQGAKQIYAIRKDVRSIFIIPPSKDELHRRLHKRGQDQEEVINQRISQAVAEMIHYTEYDYLIINDDFHTALSDLNTIICAEQLHMNNQKIRYKTLISRLLQ</sequence>
<accession>Q1LTY3</accession>